<comment type="function">
    <text evidence="2">Involved in the uptake of iron. Probably responsible for the translocation of the substrate across the membrane.</text>
</comment>
<comment type="function">
    <text evidence="5">Part of the ABC transporter complex FeuABC/YusV involved in import of the catecholate siderophores bacillibactin and enterobactin.</text>
</comment>
<comment type="subunit">
    <text evidence="4">The complex is composed of one ATP-binding protein (YusV), two transmembrane proteins (FeuB and FeuC) and a solute-binding protein (FeuA).</text>
</comment>
<comment type="subcellular location">
    <subcellularLocation>
        <location>Cell membrane</location>
        <topology>Multi-pass membrane protein</topology>
    </subcellularLocation>
</comment>
<comment type="induction">
    <text evidence="3">Induced by Btr in iron-limited conditions.</text>
</comment>
<comment type="similarity">
    <text evidence="4">Belongs to the binding-protein-dependent transport system permease family. FecCD subfamily.</text>
</comment>
<comment type="sequence caution" evidence="4">
    <conflict type="frameshift">
        <sequence resource="EMBL-CDS" id="BAA12262"/>
    </conflict>
</comment>
<accession>P40411</accession>
<organism>
    <name type="scientific">Bacillus subtilis (strain 168)</name>
    <dbReference type="NCBI Taxonomy" id="224308"/>
    <lineage>
        <taxon>Bacteria</taxon>
        <taxon>Bacillati</taxon>
        <taxon>Bacillota</taxon>
        <taxon>Bacilli</taxon>
        <taxon>Bacillales</taxon>
        <taxon>Bacillaceae</taxon>
        <taxon>Bacillus</taxon>
    </lineage>
</organism>
<proteinExistence type="evidence at protein level"/>
<protein>
    <recommendedName>
        <fullName>Iron-uptake system permease protein FeuC</fullName>
    </recommendedName>
</protein>
<feature type="chain" id="PRO_0000060025" description="Iron-uptake system permease protein FeuC">
    <location>
        <begin position="1"/>
        <end position="336"/>
    </location>
</feature>
<feature type="transmembrane region" description="Helical" evidence="1">
    <location>
        <begin position="7"/>
        <end position="27"/>
    </location>
</feature>
<feature type="transmembrane region" description="Helical" evidence="1">
    <location>
        <begin position="57"/>
        <end position="77"/>
    </location>
</feature>
<feature type="transmembrane region" description="Helical" evidence="1">
    <location>
        <begin position="85"/>
        <end position="105"/>
    </location>
</feature>
<feature type="transmembrane region" description="Helical" evidence="1">
    <location>
        <begin position="120"/>
        <end position="140"/>
    </location>
</feature>
<feature type="transmembrane region" description="Helical" evidence="1">
    <location>
        <begin position="150"/>
        <end position="170"/>
    </location>
</feature>
<feature type="transmembrane region" description="Helical" evidence="1">
    <location>
        <begin position="191"/>
        <end position="211"/>
    </location>
</feature>
<feature type="transmembrane region" description="Helical" evidence="1">
    <location>
        <begin position="246"/>
        <end position="266"/>
    </location>
</feature>
<feature type="transmembrane region" description="Helical" evidence="1">
    <location>
        <begin position="280"/>
        <end position="300"/>
    </location>
</feature>
<feature type="transmembrane region" description="Helical" evidence="1">
    <location>
        <begin position="308"/>
        <end position="328"/>
    </location>
</feature>
<dbReference type="EMBL" id="D84213">
    <property type="protein sequence ID" value="BAA12262.1"/>
    <property type="status" value="ALT_FRAME"/>
    <property type="molecule type" value="Genomic_DNA"/>
</dbReference>
<dbReference type="EMBL" id="AL009126">
    <property type="protein sequence ID" value="CAB11937.2"/>
    <property type="molecule type" value="Genomic_DNA"/>
</dbReference>
<dbReference type="EMBL" id="L19954">
    <property type="protein sequence ID" value="AAA64356.1"/>
    <property type="molecule type" value="Genomic_DNA"/>
</dbReference>
<dbReference type="PIR" id="G69621">
    <property type="entry name" value="G69621"/>
</dbReference>
<dbReference type="RefSeq" id="NP_388042.2">
    <property type="nucleotide sequence ID" value="NC_000964.3"/>
</dbReference>
<dbReference type="RefSeq" id="WP_003234980.1">
    <property type="nucleotide sequence ID" value="NZ_OZ025638.1"/>
</dbReference>
<dbReference type="SMR" id="P40411"/>
<dbReference type="FunCoup" id="P40411">
    <property type="interactions" value="39"/>
</dbReference>
<dbReference type="STRING" id="224308.BSU01610"/>
<dbReference type="TCDB" id="3.A.1.14.15">
    <property type="family name" value="the atp-binding cassette (abc) superfamily"/>
</dbReference>
<dbReference type="PaxDb" id="224308-BSU01610"/>
<dbReference type="EnsemblBacteria" id="CAB11937">
    <property type="protein sequence ID" value="CAB11937"/>
    <property type="gene ID" value="BSU_01610"/>
</dbReference>
<dbReference type="GeneID" id="938893"/>
<dbReference type="KEGG" id="bsu:BSU01610"/>
<dbReference type="PATRIC" id="fig|224308.179.peg.167"/>
<dbReference type="eggNOG" id="COG0609">
    <property type="taxonomic scope" value="Bacteria"/>
</dbReference>
<dbReference type="InParanoid" id="P40411"/>
<dbReference type="OrthoDB" id="9811721at2"/>
<dbReference type="PhylomeDB" id="P40411"/>
<dbReference type="BioCyc" id="BSUB:BSU01610-MONOMER"/>
<dbReference type="Proteomes" id="UP000001570">
    <property type="component" value="Chromosome"/>
</dbReference>
<dbReference type="GO" id="GO:0005886">
    <property type="term" value="C:plasma membrane"/>
    <property type="evidence" value="ECO:0000318"/>
    <property type="project" value="GO_Central"/>
</dbReference>
<dbReference type="GO" id="GO:0022857">
    <property type="term" value="F:transmembrane transporter activity"/>
    <property type="evidence" value="ECO:0000318"/>
    <property type="project" value="GO_Central"/>
</dbReference>
<dbReference type="GO" id="GO:0033214">
    <property type="term" value="P:siderophore-dependent iron import into cell"/>
    <property type="evidence" value="ECO:0000318"/>
    <property type="project" value="GO_Central"/>
</dbReference>
<dbReference type="CDD" id="cd06550">
    <property type="entry name" value="TM_ABC_iron-siderophores_like"/>
    <property type="match status" value="1"/>
</dbReference>
<dbReference type="FunFam" id="1.10.3470.10:FF:000001">
    <property type="entry name" value="Vitamin B12 ABC transporter permease BtuC"/>
    <property type="match status" value="1"/>
</dbReference>
<dbReference type="Gene3D" id="1.10.3470.10">
    <property type="entry name" value="ABC transporter involved in vitamin B12 uptake, BtuC"/>
    <property type="match status" value="1"/>
</dbReference>
<dbReference type="InterPro" id="IPR037294">
    <property type="entry name" value="ABC_BtuC-like"/>
</dbReference>
<dbReference type="InterPro" id="IPR000522">
    <property type="entry name" value="ABC_transptr_permease_BtuC"/>
</dbReference>
<dbReference type="PANTHER" id="PTHR30472">
    <property type="entry name" value="FERRIC ENTEROBACTIN TRANSPORT SYSTEM PERMEASE PROTEIN"/>
    <property type="match status" value="1"/>
</dbReference>
<dbReference type="PANTHER" id="PTHR30472:SF23">
    <property type="entry name" value="IRON-UPTAKE SYSTEM PERMEASE PROTEIN FEUC"/>
    <property type="match status" value="1"/>
</dbReference>
<dbReference type="Pfam" id="PF01032">
    <property type="entry name" value="FecCD"/>
    <property type="match status" value="1"/>
</dbReference>
<dbReference type="SUPFAM" id="SSF81345">
    <property type="entry name" value="ABC transporter involved in vitamin B12 uptake, BtuC"/>
    <property type="match status" value="1"/>
</dbReference>
<reference key="1">
    <citation type="journal article" date="1997" name="Microbiology">
        <title>Sequence and analysis of a 31 kb segment of the Bacillus subtilis chromosome in the area of the rrnH and rrnG operons.</title>
        <authorList>
            <person name="Liu H."/>
            <person name="Haga K."/>
            <person name="Yasumoto K."/>
            <person name="Ohashi Y."/>
            <person name="Yoshikawa H."/>
            <person name="Takahashi H."/>
        </authorList>
    </citation>
    <scope>NUCLEOTIDE SEQUENCE [GENOMIC DNA]</scope>
    <source>
        <strain>168</strain>
    </source>
</reference>
<reference key="2">
    <citation type="journal article" date="1997" name="Nature">
        <title>The complete genome sequence of the Gram-positive bacterium Bacillus subtilis.</title>
        <authorList>
            <person name="Kunst F."/>
            <person name="Ogasawara N."/>
            <person name="Moszer I."/>
            <person name="Albertini A.M."/>
            <person name="Alloni G."/>
            <person name="Azevedo V."/>
            <person name="Bertero M.G."/>
            <person name="Bessieres P."/>
            <person name="Bolotin A."/>
            <person name="Borchert S."/>
            <person name="Borriss R."/>
            <person name="Boursier L."/>
            <person name="Brans A."/>
            <person name="Braun M."/>
            <person name="Brignell S.C."/>
            <person name="Bron S."/>
            <person name="Brouillet S."/>
            <person name="Bruschi C.V."/>
            <person name="Caldwell B."/>
            <person name="Capuano V."/>
            <person name="Carter N.M."/>
            <person name="Choi S.-K."/>
            <person name="Codani J.-J."/>
            <person name="Connerton I.F."/>
            <person name="Cummings N.J."/>
            <person name="Daniel R.A."/>
            <person name="Denizot F."/>
            <person name="Devine K.M."/>
            <person name="Duesterhoeft A."/>
            <person name="Ehrlich S.D."/>
            <person name="Emmerson P.T."/>
            <person name="Entian K.-D."/>
            <person name="Errington J."/>
            <person name="Fabret C."/>
            <person name="Ferrari E."/>
            <person name="Foulger D."/>
            <person name="Fritz C."/>
            <person name="Fujita M."/>
            <person name="Fujita Y."/>
            <person name="Fuma S."/>
            <person name="Galizzi A."/>
            <person name="Galleron N."/>
            <person name="Ghim S.-Y."/>
            <person name="Glaser P."/>
            <person name="Goffeau A."/>
            <person name="Golightly E.J."/>
            <person name="Grandi G."/>
            <person name="Guiseppi G."/>
            <person name="Guy B.J."/>
            <person name="Haga K."/>
            <person name="Haiech J."/>
            <person name="Harwood C.R."/>
            <person name="Henaut A."/>
            <person name="Hilbert H."/>
            <person name="Holsappel S."/>
            <person name="Hosono S."/>
            <person name="Hullo M.-F."/>
            <person name="Itaya M."/>
            <person name="Jones L.-M."/>
            <person name="Joris B."/>
            <person name="Karamata D."/>
            <person name="Kasahara Y."/>
            <person name="Klaerr-Blanchard M."/>
            <person name="Klein C."/>
            <person name="Kobayashi Y."/>
            <person name="Koetter P."/>
            <person name="Koningstein G."/>
            <person name="Krogh S."/>
            <person name="Kumano M."/>
            <person name="Kurita K."/>
            <person name="Lapidus A."/>
            <person name="Lardinois S."/>
            <person name="Lauber J."/>
            <person name="Lazarevic V."/>
            <person name="Lee S.-M."/>
            <person name="Levine A."/>
            <person name="Liu H."/>
            <person name="Masuda S."/>
            <person name="Mauel C."/>
            <person name="Medigue C."/>
            <person name="Medina N."/>
            <person name="Mellado R.P."/>
            <person name="Mizuno M."/>
            <person name="Moestl D."/>
            <person name="Nakai S."/>
            <person name="Noback M."/>
            <person name="Noone D."/>
            <person name="O'Reilly M."/>
            <person name="Ogawa K."/>
            <person name="Ogiwara A."/>
            <person name="Oudega B."/>
            <person name="Park S.-H."/>
            <person name="Parro V."/>
            <person name="Pohl T.M."/>
            <person name="Portetelle D."/>
            <person name="Porwollik S."/>
            <person name="Prescott A.M."/>
            <person name="Presecan E."/>
            <person name="Pujic P."/>
            <person name="Purnelle B."/>
            <person name="Rapoport G."/>
            <person name="Rey M."/>
            <person name="Reynolds S."/>
            <person name="Rieger M."/>
            <person name="Rivolta C."/>
            <person name="Rocha E."/>
            <person name="Roche B."/>
            <person name="Rose M."/>
            <person name="Sadaie Y."/>
            <person name="Sato T."/>
            <person name="Scanlan E."/>
            <person name="Schleich S."/>
            <person name="Schroeter R."/>
            <person name="Scoffone F."/>
            <person name="Sekiguchi J."/>
            <person name="Sekowska A."/>
            <person name="Seror S.J."/>
            <person name="Serror P."/>
            <person name="Shin B.-S."/>
            <person name="Soldo B."/>
            <person name="Sorokin A."/>
            <person name="Tacconi E."/>
            <person name="Takagi T."/>
            <person name="Takahashi H."/>
            <person name="Takemaru K."/>
            <person name="Takeuchi M."/>
            <person name="Tamakoshi A."/>
            <person name="Tanaka T."/>
            <person name="Terpstra P."/>
            <person name="Tognoni A."/>
            <person name="Tosato V."/>
            <person name="Uchiyama S."/>
            <person name="Vandenbol M."/>
            <person name="Vannier F."/>
            <person name="Vassarotti A."/>
            <person name="Viari A."/>
            <person name="Wambutt R."/>
            <person name="Wedler E."/>
            <person name="Wedler H."/>
            <person name="Weitzenegger T."/>
            <person name="Winters P."/>
            <person name="Wipat A."/>
            <person name="Yamamoto H."/>
            <person name="Yamane K."/>
            <person name="Yasumoto K."/>
            <person name="Yata K."/>
            <person name="Yoshida K."/>
            <person name="Yoshikawa H.-F."/>
            <person name="Zumstein E."/>
            <person name="Yoshikawa H."/>
            <person name="Danchin A."/>
        </authorList>
    </citation>
    <scope>NUCLEOTIDE SEQUENCE [LARGE SCALE GENOMIC DNA]</scope>
    <source>
        <strain>168</strain>
    </source>
</reference>
<reference key="3">
    <citation type="journal article" date="2009" name="Microbiology">
        <title>From a consortium sequence to a unified sequence: the Bacillus subtilis 168 reference genome a decade later.</title>
        <authorList>
            <person name="Barbe V."/>
            <person name="Cruveiller S."/>
            <person name="Kunst F."/>
            <person name="Lenoble P."/>
            <person name="Meurice G."/>
            <person name="Sekowska A."/>
            <person name="Vallenet D."/>
            <person name="Wang T."/>
            <person name="Moszer I."/>
            <person name="Medigue C."/>
            <person name="Danchin A."/>
        </authorList>
    </citation>
    <scope>SEQUENCE REVISION TO C-TERMINUS</scope>
</reference>
<reference key="4">
    <citation type="journal article" date="1994" name="Biochim. Biophys. Acta">
        <title>Isolation of Tn917 insertional mutants of Bacillus subtilis that are resistant to the protonophore carbonyl cyanide m-chlorophenylhydrazone.</title>
        <authorList>
            <person name="Quirk P.G."/>
            <person name="Guffanti A.A."/>
            <person name="Clejan S."/>
            <person name="Cheng J."/>
            <person name="Krulwich T.A."/>
        </authorList>
    </citation>
    <scope>NUCLEOTIDE SEQUENCE [GENOMIC DNA] OF 1-87</scope>
    <source>
        <strain>BD99 / MS94</strain>
    </source>
</reference>
<reference key="5">
    <citation type="journal article" date="2006" name="J. Bacteriol.">
        <title>Role of the Fur regulon in iron transport in Bacillus subtilis.</title>
        <authorList>
            <person name="Ollinger J."/>
            <person name="Song K.-B."/>
            <person name="Antelmann H."/>
            <person name="Hecker M."/>
            <person name="Helmann J.D."/>
        </authorList>
    </citation>
    <scope>FUNCTION</scope>
    <scope>POSSIBLE SUBUNIT</scope>
    <source>
        <strain>168</strain>
    </source>
</reference>
<reference key="6">
    <citation type="journal article" date="2007" name="Mol. Microbiol.">
        <title>Substrate induction of siderophore transport in Bacillus subtilis mediated by a novel one-component regulator.</title>
        <authorList>
            <person name="Gaballa A."/>
            <person name="Helmann J.D."/>
        </authorList>
    </citation>
    <scope>INDUCTION</scope>
    <source>
        <strain>168 / CU1065</strain>
    </source>
</reference>
<sequence length="336" mass="36090">MAKKYALFIALILVVSYFSLTSGSFSVRPAELLSTLFQIDPNPQYEILLFDLRLPRVVMAAIIGLGLGIAGAVIQAITRNGLADPGILGINAGAGAGIVAFMLLFQGQKEVTSIAAAMGMPLFGLIGGLIAAILIYIFAWHRGNLDSGRIILVGIAINSGFSALSLFLSLKMDPQDYQMAMVWKNGSIWSANWTYITAVLPWMLLFIPILIGKSRLLDTIRFDEDTVRSLGISSNKEKTILLVACVAIISACVSVAGSMAFVGLIAPHISRRLAGVEHRYILPLSGLIGMLLVISADFAGKLFFQPAEVPAGIILAILGVPYFLYLLFKQKKGENA</sequence>
<keyword id="KW-1003">Cell membrane</keyword>
<keyword id="KW-0406">Ion transport</keyword>
<keyword id="KW-0408">Iron</keyword>
<keyword id="KW-0410">Iron transport</keyword>
<keyword id="KW-0472">Membrane</keyword>
<keyword id="KW-1185">Reference proteome</keyword>
<keyword id="KW-0812">Transmembrane</keyword>
<keyword id="KW-1133">Transmembrane helix</keyword>
<keyword id="KW-0813">Transport</keyword>
<name>FEUC_BACSU</name>
<evidence type="ECO:0000255" key="1"/>
<evidence type="ECO:0000269" key="2">
    <source>
    </source>
</evidence>
<evidence type="ECO:0000269" key="3">
    <source>
    </source>
</evidence>
<evidence type="ECO:0000305" key="4"/>
<evidence type="ECO:0000305" key="5">
    <source>
    </source>
</evidence>
<gene>
    <name type="primary">feuC</name>
    <name type="ordered locus">BSU01610</name>
</gene>